<protein>
    <recommendedName>
        <fullName>Contryphan-Tx</fullName>
    </recommendedName>
</protein>
<accession>Q9NDA7</accession>
<feature type="signal peptide" evidence="7">
    <location>
        <begin position="1"/>
        <end position="23"/>
    </location>
</feature>
<feature type="propeptide" id="PRO_0000035075" evidence="9">
    <location>
        <begin position="24"/>
        <end position="54"/>
    </location>
</feature>
<feature type="peptide" id="PRO_0000035076" description="Contryphan-Tx" evidence="8">
    <location>
        <begin position="55"/>
        <end position="62"/>
    </location>
</feature>
<feature type="modified residue" description="4-hydroxyproline" evidence="3">
    <location>
        <position position="57"/>
    </location>
</feature>
<feature type="modified residue" description="D-tryptophan" evidence="3">
    <location>
        <position position="58"/>
    </location>
</feature>
<feature type="modified residue" description="Cysteine amide" evidence="3">
    <location>
        <position position="62"/>
    </location>
</feature>
<name>COW1_CONTE</name>
<organism>
    <name type="scientific">Conus textile</name>
    <name type="common">Cloth-of-gold cone</name>
    <dbReference type="NCBI Taxonomy" id="6494"/>
    <lineage>
        <taxon>Eukaryota</taxon>
        <taxon>Metazoa</taxon>
        <taxon>Spiralia</taxon>
        <taxon>Lophotrochozoa</taxon>
        <taxon>Mollusca</taxon>
        <taxon>Gastropoda</taxon>
        <taxon>Caenogastropoda</taxon>
        <taxon>Neogastropoda</taxon>
        <taxon>Conoidea</taxon>
        <taxon>Conidae</taxon>
        <taxon>Conus</taxon>
        <taxon>Cylinder</taxon>
    </lineage>
</organism>
<evidence type="ECO:0000250" key="1">
    <source>
        <dbReference type="UniProtKB" id="P0C248"/>
    </source>
</evidence>
<evidence type="ECO:0000250" key="2">
    <source>
        <dbReference type="UniProtKB" id="P0C250"/>
    </source>
</evidence>
<evidence type="ECO:0000250" key="3">
    <source>
        <dbReference type="UniProtKB" id="P58786"/>
    </source>
</evidence>
<evidence type="ECO:0000250" key="4">
    <source>
        <dbReference type="UniProtKB" id="P58787"/>
    </source>
</evidence>
<evidence type="ECO:0000250" key="5">
    <source>
        <dbReference type="UniProtKB" id="P62903"/>
    </source>
</evidence>
<evidence type="ECO:0000250" key="6">
    <source>
        <dbReference type="UniProtKB" id="P83047"/>
    </source>
</evidence>
<evidence type="ECO:0000255" key="7"/>
<evidence type="ECO:0000269" key="8">
    <source>
    </source>
</evidence>
<evidence type="ECO:0000305" key="9"/>
<evidence type="ECO:0000305" key="10">
    <source>
    </source>
</evidence>
<sequence>MGKLTILVLVAVALLSTQVMVQGDGDQPADRDAVPRDDNPGGMSEKFLNALQRRGCPWQPYCG</sequence>
<dbReference type="EMBL" id="AF166323">
    <property type="protein sequence ID" value="AAF82243.1"/>
    <property type="molecule type" value="mRNA"/>
</dbReference>
<dbReference type="SMR" id="Q9NDA7"/>
<dbReference type="ConoServer" id="1316">
    <property type="toxin name" value="Contryphan-Tx precursor"/>
</dbReference>
<dbReference type="GO" id="GO:0005576">
    <property type="term" value="C:extracellular region"/>
    <property type="evidence" value="ECO:0007669"/>
    <property type="project" value="UniProtKB-SubCell"/>
</dbReference>
<dbReference type="GO" id="GO:0008200">
    <property type="term" value="F:ion channel inhibitor activity"/>
    <property type="evidence" value="ECO:0007669"/>
    <property type="project" value="InterPro"/>
</dbReference>
<dbReference type="GO" id="GO:0090729">
    <property type="term" value="F:toxin activity"/>
    <property type="evidence" value="ECO:0007669"/>
    <property type="project" value="UniProtKB-KW"/>
</dbReference>
<dbReference type="InterPro" id="IPR004214">
    <property type="entry name" value="Conotoxin"/>
</dbReference>
<dbReference type="InterPro" id="IPR011062">
    <property type="entry name" value="Contryphan_CS"/>
</dbReference>
<dbReference type="Pfam" id="PF02950">
    <property type="entry name" value="Conotoxin"/>
    <property type="match status" value="1"/>
</dbReference>
<dbReference type="PROSITE" id="PS60027">
    <property type="entry name" value="CONTRYPHAN"/>
    <property type="match status" value="1"/>
</dbReference>
<keyword id="KW-0027">Amidation</keyword>
<keyword id="KW-0165">Cleavage on pair of basic residues</keyword>
<keyword id="KW-0208">D-amino acid</keyword>
<keyword id="KW-0379">Hydroxylation</keyword>
<keyword id="KW-0872">Ion channel impairing toxin</keyword>
<keyword id="KW-0528">Neurotoxin</keyword>
<keyword id="KW-0964">Secreted</keyword>
<keyword id="KW-0732">Signal</keyword>
<keyword id="KW-0800">Toxin</keyword>
<reference key="1">
    <citation type="journal article" date="2001" name="Toxicon">
        <title>Contryphans from Conus textile venom ducts.</title>
        <authorList>
            <person name="Jimenez E.C."/>
            <person name="Watkins M."/>
            <person name="Juszczak L.J."/>
            <person name="Cruz L.J."/>
            <person name="Olivera B.M."/>
        </authorList>
    </citation>
    <scope>NUCLEOTIDE SEQUENCE [MRNA]</scope>
    <scope>SYNTHESIS OF 55-62</scope>
    <scope>MASS SPECTROMETRY</scope>
    <scope>SUBCELLULAR LOCATION</scope>
    <source>
        <tissue>Venom</tissue>
        <tissue>Venom duct</tissue>
    </source>
</reference>
<comment type="function">
    <text evidence="1 2 5 6">Its target is unknown, but this toxin may modulate voltage-activated calcium channels (Cav) or calcium-dependent potassium channels (KCa).</text>
</comment>
<comment type="subcellular location">
    <subcellularLocation>
        <location evidence="8">Secreted</location>
    </subcellularLocation>
</comment>
<comment type="tissue specificity">
    <text evidence="10">Expressed by the venom duct.</text>
</comment>
<comment type="domain">
    <text evidence="9">The cysteine framework is C-C.</text>
</comment>
<comment type="mass spectrometry"/>
<comment type="miscellaneous">
    <text evidence="4">Exists in two forms, due to cis-trans isomerization at 56-Cys-hydroxyPro-57. The cis conformation is the major form.</text>
</comment>
<comment type="similarity">
    <text evidence="9">Belongs to the O2 superfamily. Contryphan family.</text>
</comment>
<proteinExistence type="evidence at protein level"/>